<proteinExistence type="inferred from homology"/>
<comment type="function">
    <text evidence="1">Involved in the degradation of certain denaturated proteins, including DnaA, during heat shock stress.</text>
</comment>
<comment type="subcellular location">
    <subcellularLocation>
        <location evidence="1">Cytoplasm</location>
    </subcellularLocation>
</comment>
<comment type="similarity">
    <text evidence="1">Belongs to the HspQ family.</text>
</comment>
<organism>
    <name type="scientific">Serratia proteamaculans (strain 568)</name>
    <dbReference type="NCBI Taxonomy" id="399741"/>
    <lineage>
        <taxon>Bacteria</taxon>
        <taxon>Pseudomonadati</taxon>
        <taxon>Pseudomonadota</taxon>
        <taxon>Gammaproteobacteria</taxon>
        <taxon>Enterobacterales</taxon>
        <taxon>Yersiniaceae</taxon>
        <taxon>Serratia</taxon>
    </lineage>
</organism>
<gene>
    <name evidence="1" type="primary">hspQ</name>
    <name type="ordered locus">Spro_1763</name>
</gene>
<protein>
    <recommendedName>
        <fullName evidence="1">Heat shock protein HspQ</fullName>
    </recommendedName>
</protein>
<dbReference type="EMBL" id="CP000826">
    <property type="protein sequence ID" value="ABV40867.1"/>
    <property type="molecule type" value="Genomic_DNA"/>
</dbReference>
<dbReference type="SMR" id="A8GCM7"/>
<dbReference type="STRING" id="399741.Spro_1763"/>
<dbReference type="KEGG" id="spe:Spro_1763"/>
<dbReference type="eggNOG" id="COG3785">
    <property type="taxonomic scope" value="Bacteria"/>
</dbReference>
<dbReference type="HOGENOM" id="CLU_123865_1_0_6"/>
<dbReference type="OrthoDB" id="9806050at2"/>
<dbReference type="GO" id="GO:0005737">
    <property type="term" value="C:cytoplasm"/>
    <property type="evidence" value="ECO:0007669"/>
    <property type="project" value="UniProtKB-SubCell"/>
</dbReference>
<dbReference type="GO" id="GO:0003677">
    <property type="term" value="F:DNA binding"/>
    <property type="evidence" value="ECO:0007669"/>
    <property type="project" value="InterPro"/>
</dbReference>
<dbReference type="GO" id="GO:0009408">
    <property type="term" value="P:response to heat"/>
    <property type="evidence" value="ECO:0007669"/>
    <property type="project" value="UniProtKB-UniRule"/>
</dbReference>
<dbReference type="Gene3D" id="2.30.30.390">
    <property type="entry name" value="Hemimethylated DNA-binding domain"/>
    <property type="match status" value="1"/>
</dbReference>
<dbReference type="HAMAP" id="MF_01194">
    <property type="entry name" value="HspQ"/>
    <property type="match status" value="1"/>
</dbReference>
<dbReference type="InterPro" id="IPR011722">
    <property type="entry name" value="Hemimethylated_DNA-bd_dom"/>
</dbReference>
<dbReference type="InterPro" id="IPR036623">
    <property type="entry name" value="Hemimethylated_DNA-bd_sf"/>
</dbReference>
<dbReference type="InterPro" id="IPR022866">
    <property type="entry name" value="HspQ"/>
</dbReference>
<dbReference type="NCBIfam" id="NF010729">
    <property type="entry name" value="PRK14129.1"/>
    <property type="match status" value="1"/>
</dbReference>
<dbReference type="NCBIfam" id="TIGR02097">
    <property type="entry name" value="yccV"/>
    <property type="match status" value="1"/>
</dbReference>
<dbReference type="Pfam" id="PF08755">
    <property type="entry name" value="YccV-like"/>
    <property type="match status" value="1"/>
</dbReference>
<dbReference type="SMART" id="SM00992">
    <property type="entry name" value="YccV-like"/>
    <property type="match status" value="1"/>
</dbReference>
<dbReference type="SUPFAM" id="SSF141255">
    <property type="entry name" value="YccV-like"/>
    <property type="match status" value="1"/>
</dbReference>
<name>HSPQ_SERP5</name>
<accession>A8GCM7</accession>
<reference key="1">
    <citation type="submission" date="2007-09" db="EMBL/GenBank/DDBJ databases">
        <title>Complete sequence of chromosome of Serratia proteamaculans 568.</title>
        <authorList>
            <consortium name="US DOE Joint Genome Institute"/>
            <person name="Copeland A."/>
            <person name="Lucas S."/>
            <person name="Lapidus A."/>
            <person name="Barry K."/>
            <person name="Glavina del Rio T."/>
            <person name="Dalin E."/>
            <person name="Tice H."/>
            <person name="Pitluck S."/>
            <person name="Chain P."/>
            <person name="Malfatti S."/>
            <person name="Shin M."/>
            <person name="Vergez L."/>
            <person name="Schmutz J."/>
            <person name="Larimer F."/>
            <person name="Land M."/>
            <person name="Hauser L."/>
            <person name="Kyrpides N."/>
            <person name="Kim E."/>
            <person name="Taghavi S."/>
            <person name="Newman L."/>
            <person name="Vangronsveld J."/>
            <person name="van der Lelie D."/>
            <person name="Richardson P."/>
        </authorList>
    </citation>
    <scope>NUCLEOTIDE SEQUENCE [LARGE SCALE GENOMIC DNA]</scope>
    <source>
        <strain>568</strain>
    </source>
</reference>
<sequence length="105" mass="11892">MIASKFGIGQQVRHKLLGYLGVVIDIDPEYSMEQPKADEIAANTDLRFAPWYHVVMEDEEGQPVHTYLAEAQLDGEAQEAHPEQPSLDELAESIRHQLQAPRLRN</sequence>
<keyword id="KW-0963">Cytoplasm</keyword>
<keyword id="KW-0346">Stress response</keyword>
<evidence type="ECO:0000255" key="1">
    <source>
        <dbReference type="HAMAP-Rule" id="MF_01194"/>
    </source>
</evidence>
<evidence type="ECO:0000256" key="2">
    <source>
        <dbReference type="SAM" id="MobiDB-lite"/>
    </source>
</evidence>
<feature type="chain" id="PRO_1000065888" description="Heat shock protein HspQ">
    <location>
        <begin position="1"/>
        <end position="105"/>
    </location>
</feature>
<feature type="region of interest" description="Disordered" evidence="2">
    <location>
        <begin position="75"/>
        <end position="105"/>
    </location>
</feature>